<proteinExistence type="inferred from homology"/>
<dbReference type="EC" id="2.4.99.17" evidence="1"/>
<dbReference type="EMBL" id="CP000473">
    <property type="protein sequence ID" value="ABJ87280.1"/>
    <property type="molecule type" value="Genomic_DNA"/>
</dbReference>
<dbReference type="SMR" id="Q01SU0"/>
<dbReference type="FunCoup" id="Q01SU0">
    <property type="interactions" value="491"/>
</dbReference>
<dbReference type="STRING" id="234267.Acid_6354"/>
<dbReference type="KEGG" id="sus:Acid_6354"/>
<dbReference type="eggNOG" id="COG0809">
    <property type="taxonomic scope" value="Bacteria"/>
</dbReference>
<dbReference type="HOGENOM" id="CLU_039110_1_0_0"/>
<dbReference type="InParanoid" id="Q01SU0"/>
<dbReference type="OrthoDB" id="9805933at2"/>
<dbReference type="UniPathway" id="UPA00392"/>
<dbReference type="GO" id="GO:0005737">
    <property type="term" value="C:cytoplasm"/>
    <property type="evidence" value="ECO:0007669"/>
    <property type="project" value="UniProtKB-SubCell"/>
</dbReference>
<dbReference type="GO" id="GO:0051075">
    <property type="term" value="F:S-adenosylmethionine:tRNA ribosyltransferase-isomerase activity"/>
    <property type="evidence" value="ECO:0007669"/>
    <property type="project" value="UniProtKB-EC"/>
</dbReference>
<dbReference type="GO" id="GO:0008616">
    <property type="term" value="P:queuosine biosynthetic process"/>
    <property type="evidence" value="ECO:0007669"/>
    <property type="project" value="UniProtKB-UniRule"/>
</dbReference>
<dbReference type="GO" id="GO:0002099">
    <property type="term" value="P:tRNA wobble guanine modification"/>
    <property type="evidence" value="ECO:0007669"/>
    <property type="project" value="TreeGrafter"/>
</dbReference>
<dbReference type="FunFam" id="2.40.10.240:FF:000002">
    <property type="entry name" value="S-adenosylmethionine:tRNA ribosyltransferase-isomerase"/>
    <property type="match status" value="1"/>
</dbReference>
<dbReference type="Gene3D" id="2.40.10.240">
    <property type="entry name" value="QueA-like"/>
    <property type="match status" value="1"/>
</dbReference>
<dbReference type="Gene3D" id="3.40.1780.10">
    <property type="entry name" value="QueA-like"/>
    <property type="match status" value="1"/>
</dbReference>
<dbReference type="HAMAP" id="MF_00113">
    <property type="entry name" value="QueA"/>
    <property type="match status" value="1"/>
</dbReference>
<dbReference type="InterPro" id="IPR003699">
    <property type="entry name" value="QueA"/>
</dbReference>
<dbReference type="InterPro" id="IPR042118">
    <property type="entry name" value="QueA_dom1"/>
</dbReference>
<dbReference type="InterPro" id="IPR042119">
    <property type="entry name" value="QueA_dom2"/>
</dbReference>
<dbReference type="InterPro" id="IPR036100">
    <property type="entry name" value="QueA_sf"/>
</dbReference>
<dbReference type="NCBIfam" id="NF001140">
    <property type="entry name" value="PRK00147.1"/>
    <property type="match status" value="1"/>
</dbReference>
<dbReference type="NCBIfam" id="TIGR00113">
    <property type="entry name" value="queA"/>
    <property type="match status" value="1"/>
</dbReference>
<dbReference type="PANTHER" id="PTHR30307">
    <property type="entry name" value="S-ADENOSYLMETHIONINE:TRNA RIBOSYLTRANSFERASE-ISOMERASE"/>
    <property type="match status" value="1"/>
</dbReference>
<dbReference type="PANTHER" id="PTHR30307:SF0">
    <property type="entry name" value="S-ADENOSYLMETHIONINE:TRNA RIBOSYLTRANSFERASE-ISOMERASE"/>
    <property type="match status" value="1"/>
</dbReference>
<dbReference type="Pfam" id="PF02547">
    <property type="entry name" value="Queuosine_synth"/>
    <property type="match status" value="1"/>
</dbReference>
<dbReference type="SUPFAM" id="SSF111337">
    <property type="entry name" value="QueA-like"/>
    <property type="match status" value="1"/>
</dbReference>
<gene>
    <name evidence="1" type="primary">queA</name>
    <name type="ordered locus">Acid_6354</name>
</gene>
<keyword id="KW-0963">Cytoplasm</keyword>
<keyword id="KW-0671">Queuosine biosynthesis</keyword>
<keyword id="KW-0949">S-adenosyl-L-methionine</keyword>
<keyword id="KW-0808">Transferase</keyword>
<protein>
    <recommendedName>
        <fullName evidence="1">S-adenosylmethionine:tRNA ribosyltransferase-isomerase</fullName>
        <ecNumber evidence="1">2.4.99.17</ecNumber>
    </recommendedName>
    <alternativeName>
        <fullName evidence="1">Queuosine biosynthesis protein QueA</fullName>
    </alternativeName>
</protein>
<evidence type="ECO:0000255" key="1">
    <source>
        <dbReference type="HAMAP-Rule" id="MF_00113"/>
    </source>
</evidence>
<reference key="1">
    <citation type="journal article" date="2009" name="Appl. Environ. Microbiol.">
        <title>Three genomes from the phylum Acidobacteria provide insight into the lifestyles of these microorganisms in soils.</title>
        <authorList>
            <person name="Ward N.L."/>
            <person name="Challacombe J.F."/>
            <person name="Janssen P.H."/>
            <person name="Henrissat B."/>
            <person name="Coutinho P.M."/>
            <person name="Wu M."/>
            <person name="Xie G."/>
            <person name="Haft D.H."/>
            <person name="Sait M."/>
            <person name="Badger J."/>
            <person name="Barabote R.D."/>
            <person name="Bradley B."/>
            <person name="Brettin T.S."/>
            <person name="Brinkac L.M."/>
            <person name="Bruce D."/>
            <person name="Creasy T."/>
            <person name="Daugherty S.C."/>
            <person name="Davidsen T.M."/>
            <person name="DeBoy R.T."/>
            <person name="Detter J.C."/>
            <person name="Dodson R.J."/>
            <person name="Durkin A.S."/>
            <person name="Ganapathy A."/>
            <person name="Gwinn-Giglio M."/>
            <person name="Han C.S."/>
            <person name="Khouri H."/>
            <person name="Kiss H."/>
            <person name="Kothari S.P."/>
            <person name="Madupu R."/>
            <person name="Nelson K.E."/>
            <person name="Nelson W.C."/>
            <person name="Paulsen I."/>
            <person name="Penn K."/>
            <person name="Ren Q."/>
            <person name="Rosovitz M.J."/>
            <person name="Selengut J.D."/>
            <person name="Shrivastava S."/>
            <person name="Sullivan S.A."/>
            <person name="Tapia R."/>
            <person name="Thompson L.S."/>
            <person name="Watkins K.L."/>
            <person name="Yang Q."/>
            <person name="Yu C."/>
            <person name="Zafar N."/>
            <person name="Zhou L."/>
            <person name="Kuske C.R."/>
        </authorList>
    </citation>
    <scope>NUCLEOTIDE SEQUENCE [LARGE SCALE GENOMIC DNA]</scope>
    <source>
        <strain>Ellin6076</strain>
    </source>
</reference>
<name>QUEA_SOLUE</name>
<feature type="chain" id="PRO_1000015282" description="S-adenosylmethionine:tRNA ribosyltransferase-isomerase">
    <location>
        <begin position="1"/>
        <end position="352"/>
    </location>
</feature>
<organism>
    <name type="scientific">Solibacter usitatus (strain Ellin6076)</name>
    <dbReference type="NCBI Taxonomy" id="234267"/>
    <lineage>
        <taxon>Bacteria</taxon>
        <taxon>Pseudomonadati</taxon>
        <taxon>Acidobacteriota</taxon>
        <taxon>Terriglobia</taxon>
        <taxon>Bryobacterales</taxon>
        <taxon>Solibacteraceae</taxon>
        <taxon>Candidatus Solibacter</taxon>
    </lineage>
</organism>
<accession>Q01SU0</accession>
<comment type="function">
    <text evidence="1">Transfers and isomerizes the ribose moiety from AdoMet to the 7-aminomethyl group of 7-deazaguanine (preQ1-tRNA) to give epoxyqueuosine (oQ-tRNA).</text>
</comment>
<comment type="catalytic activity">
    <reaction evidence="1">
        <text>7-aminomethyl-7-carbaguanosine(34) in tRNA + S-adenosyl-L-methionine = epoxyqueuosine(34) in tRNA + adenine + L-methionine + 2 H(+)</text>
        <dbReference type="Rhea" id="RHEA:32155"/>
        <dbReference type="Rhea" id="RHEA-COMP:10342"/>
        <dbReference type="Rhea" id="RHEA-COMP:18582"/>
        <dbReference type="ChEBI" id="CHEBI:15378"/>
        <dbReference type="ChEBI" id="CHEBI:16708"/>
        <dbReference type="ChEBI" id="CHEBI:57844"/>
        <dbReference type="ChEBI" id="CHEBI:59789"/>
        <dbReference type="ChEBI" id="CHEBI:82833"/>
        <dbReference type="ChEBI" id="CHEBI:194443"/>
        <dbReference type="EC" id="2.4.99.17"/>
    </reaction>
</comment>
<comment type="pathway">
    <text evidence="1">tRNA modification; tRNA-queuosine biosynthesis.</text>
</comment>
<comment type="subunit">
    <text evidence="1">Monomer.</text>
</comment>
<comment type="subcellular location">
    <subcellularLocation>
        <location evidence="1">Cytoplasm</location>
    </subcellularLocation>
</comment>
<comment type="similarity">
    <text evidence="1">Belongs to the QueA family.</text>
</comment>
<sequence>MNLSEFDYHLPDELIAQEALADRAASRMLVVHREQGRWEDRCFRDLPEFLRPGDCLVLNDSRVFPARLFGHRSGVHSLAVGKNNPKRHEFLSGAVEVFLLRAVSQDGRDWQALVRPGRKMRTGERIVFDEGLEAEIIARGEFGERTVRFLGSGDLYAAFDRIGHVPLPPYIKRDDSPADRERYQTVFAREKGSVAAPTAGLHFTPEVIERCQAAGADVATVTLHVGLGTFQPLHQEVVEEVKLHTEHYRITADNAGKIGAATRVVAVGTTSVRTLETAARDGVLEGETDIFLYPGVPFRRTGAMLTNFHLPRTSLLVLVSAFAGKDLMLAAYRHAVEARYRFYSYGDCMLIV</sequence>